<comment type="function">
    <text evidence="1">Catalyzes the transfer of a dimethylallyl group onto the adenine at position 37 in tRNAs that read codons beginning with uridine, leading to the formation of N6-(dimethylallyl)adenosine (i(6)A).</text>
</comment>
<comment type="catalytic activity">
    <reaction evidence="1">
        <text>adenosine(37) in tRNA + dimethylallyl diphosphate = N(6)-dimethylallyladenosine(37) in tRNA + diphosphate</text>
        <dbReference type="Rhea" id="RHEA:26482"/>
        <dbReference type="Rhea" id="RHEA-COMP:10162"/>
        <dbReference type="Rhea" id="RHEA-COMP:10375"/>
        <dbReference type="ChEBI" id="CHEBI:33019"/>
        <dbReference type="ChEBI" id="CHEBI:57623"/>
        <dbReference type="ChEBI" id="CHEBI:74411"/>
        <dbReference type="ChEBI" id="CHEBI:74415"/>
        <dbReference type="EC" id="2.5.1.75"/>
    </reaction>
</comment>
<comment type="cofactor">
    <cofactor evidence="1">
        <name>Mg(2+)</name>
        <dbReference type="ChEBI" id="CHEBI:18420"/>
    </cofactor>
</comment>
<comment type="subunit">
    <text evidence="1">Monomer.</text>
</comment>
<comment type="similarity">
    <text evidence="1">Belongs to the IPP transferase family.</text>
</comment>
<feature type="chain" id="PRO_1000098636" description="tRNA dimethylallyltransferase">
    <location>
        <begin position="1"/>
        <end position="314"/>
    </location>
</feature>
<feature type="region of interest" description="Interaction with substrate tRNA" evidence="1">
    <location>
        <begin position="37"/>
        <end position="40"/>
    </location>
</feature>
<feature type="region of interest" description="Interaction with substrate tRNA" evidence="1">
    <location>
        <begin position="162"/>
        <end position="166"/>
    </location>
</feature>
<feature type="binding site" evidence="1">
    <location>
        <begin position="12"/>
        <end position="19"/>
    </location>
    <ligand>
        <name>ATP</name>
        <dbReference type="ChEBI" id="CHEBI:30616"/>
    </ligand>
</feature>
<feature type="binding site" evidence="1">
    <location>
        <begin position="14"/>
        <end position="19"/>
    </location>
    <ligand>
        <name>substrate</name>
    </ligand>
</feature>
<feature type="site" description="Interaction with substrate tRNA" evidence="1">
    <location>
        <position position="103"/>
    </location>
</feature>
<feature type="site" description="Interaction with substrate tRNA" evidence="1">
    <location>
        <position position="126"/>
    </location>
</feature>
<evidence type="ECO:0000255" key="1">
    <source>
        <dbReference type="HAMAP-Rule" id="MF_00185"/>
    </source>
</evidence>
<accession>A3M6J6</accession>
<gene>
    <name evidence="1" type="primary">miaA</name>
    <name type="ordered locus">A1S_2113</name>
</gene>
<dbReference type="EC" id="2.5.1.75" evidence="1"/>
<dbReference type="EMBL" id="CP000521">
    <property type="protein sequence ID" value="ABO12540.2"/>
    <property type="molecule type" value="Genomic_DNA"/>
</dbReference>
<dbReference type="RefSeq" id="WP_000070779.1">
    <property type="nucleotide sequence ID" value="NZ_CP053098.1"/>
</dbReference>
<dbReference type="SMR" id="A3M6J6"/>
<dbReference type="GeneID" id="92894356"/>
<dbReference type="KEGG" id="acb:A1S_2113"/>
<dbReference type="HOGENOM" id="CLU_032616_0_0_6"/>
<dbReference type="GO" id="GO:0005524">
    <property type="term" value="F:ATP binding"/>
    <property type="evidence" value="ECO:0007669"/>
    <property type="project" value="UniProtKB-UniRule"/>
</dbReference>
<dbReference type="GO" id="GO:0052381">
    <property type="term" value="F:tRNA dimethylallyltransferase activity"/>
    <property type="evidence" value="ECO:0007669"/>
    <property type="project" value="UniProtKB-UniRule"/>
</dbReference>
<dbReference type="GO" id="GO:0006400">
    <property type="term" value="P:tRNA modification"/>
    <property type="evidence" value="ECO:0007669"/>
    <property type="project" value="TreeGrafter"/>
</dbReference>
<dbReference type="FunFam" id="1.10.20.140:FF:000001">
    <property type="entry name" value="tRNA dimethylallyltransferase"/>
    <property type="match status" value="1"/>
</dbReference>
<dbReference type="Gene3D" id="1.10.20.140">
    <property type="match status" value="1"/>
</dbReference>
<dbReference type="Gene3D" id="3.40.50.300">
    <property type="entry name" value="P-loop containing nucleotide triphosphate hydrolases"/>
    <property type="match status" value="1"/>
</dbReference>
<dbReference type="HAMAP" id="MF_00185">
    <property type="entry name" value="IPP_trans"/>
    <property type="match status" value="1"/>
</dbReference>
<dbReference type="InterPro" id="IPR039657">
    <property type="entry name" value="Dimethylallyltransferase"/>
</dbReference>
<dbReference type="InterPro" id="IPR018022">
    <property type="entry name" value="IPT"/>
</dbReference>
<dbReference type="InterPro" id="IPR027417">
    <property type="entry name" value="P-loop_NTPase"/>
</dbReference>
<dbReference type="NCBIfam" id="TIGR00174">
    <property type="entry name" value="miaA"/>
    <property type="match status" value="1"/>
</dbReference>
<dbReference type="PANTHER" id="PTHR11088">
    <property type="entry name" value="TRNA DIMETHYLALLYLTRANSFERASE"/>
    <property type="match status" value="1"/>
</dbReference>
<dbReference type="PANTHER" id="PTHR11088:SF60">
    <property type="entry name" value="TRNA DIMETHYLALLYLTRANSFERASE"/>
    <property type="match status" value="1"/>
</dbReference>
<dbReference type="Pfam" id="PF01715">
    <property type="entry name" value="IPPT"/>
    <property type="match status" value="1"/>
</dbReference>
<dbReference type="SUPFAM" id="SSF52540">
    <property type="entry name" value="P-loop containing nucleoside triphosphate hydrolases"/>
    <property type="match status" value="2"/>
</dbReference>
<sequence length="314" mass="35827">MSNQLPVINLMGPTASGKTALACELYERGNFELISVDSALVYKDMDIGTAKPTREEQELYPHHLIDIITPLEVYSAAQFVEDACALIDEMHSRGKTPILVGGTMLYFKALLEGLSSNLPSADANVRAAIEEKAANEGWQAVYDELVAVDPAAGVKFKVSDKQRIIRALEVYRITGQPITKLQAEQPKNVPYRYTFHNYALLPDRLELHQRIEQRLSKMWDIGFLSEVESLIEKYDLDENLPSMRSVGYRQALEFLLKSDMSLKKKQEMEDKALFATRQLAKRQYTWLRSLQEIHDFKTYLTIKQAKEDLRNSYG</sequence>
<name>MIAA_ACIBT</name>
<organism>
    <name type="scientific">Acinetobacter baumannii (strain ATCC 17978 / DSM 105126 / CIP 53.77 / LMG 1025 / NCDC KC755 / 5377)</name>
    <dbReference type="NCBI Taxonomy" id="400667"/>
    <lineage>
        <taxon>Bacteria</taxon>
        <taxon>Pseudomonadati</taxon>
        <taxon>Pseudomonadota</taxon>
        <taxon>Gammaproteobacteria</taxon>
        <taxon>Moraxellales</taxon>
        <taxon>Moraxellaceae</taxon>
        <taxon>Acinetobacter</taxon>
        <taxon>Acinetobacter calcoaceticus/baumannii complex</taxon>
    </lineage>
</organism>
<keyword id="KW-0067">ATP-binding</keyword>
<keyword id="KW-0460">Magnesium</keyword>
<keyword id="KW-0547">Nucleotide-binding</keyword>
<keyword id="KW-0808">Transferase</keyword>
<keyword id="KW-0819">tRNA processing</keyword>
<protein>
    <recommendedName>
        <fullName evidence="1">tRNA dimethylallyltransferase</fullName>
        <ecNumber evidence="1">2.5.1.75</ecNumber>
    </recommendedName>
    <alternativeName>
        <fullName evidence="1">Dimethylallyl diphosphate:tRNA dimethylallyltransferase</fullName>
        <shortName evidence="1">DMAPP:tRNA dimethylallyltransferase</shortName>
        <shortName evidence="1">DMATase</shortName>
    </alternativeName>
    <alternativeName>
        <fullName evidence="1">Isopentenyl-diphosphate:tRNA isopentenyltransferase</fullName>
        <shortName evidence="1">IPP transferase</shortName>
        <shortName evidence="1">IPPT</shortName>
        <shortName evidence="1">IPTase</shortName>
    </alternativeName>
</protein>
<reference key="1">
    <citation type="journal article" date="2007" name="Genes Dev.">
        <title>New insights into Acinetobacter baumannii pathogenesis revealed by high-density pyrosequencing and transposon mutagenesis.</title>
        <authorList>
            <person name="Smith M.G."/>
            <person name="Gianoulis T.A."/>
            <person name="Pukatzki S."/>
            <person name="Mekalanos J.J."/>
            <person name="Ornston L.N."/>
            <person name="Gerstein M."/>
            <person name="Snyder M."/>
        </authorList>
    </citation>
    <scope>NUCLEOTIDE SEQUENCE [LARGE SCALE GENOMIC DNA]</scope>
    <source>
        <strain>ATCC 17978 / DSM 105126 / CIP 53.77 / LMG 1025 / NCDC KC755 / 5377</strain>
    </source>
</reference>
<proteinExistence type="inferred from homology"/>